<protein>
    <recommendedName>
        <fullName evidence="1">Oxygen-dependent coproporphyrinogen-III oxidase</fullName>
        <shortName evidence="1">CPO</shortName>
        <shortName evidence="1">Coprogen oxidase</shortName>
        <shortName evidence="1">Coproporphyrinogenase</shortName>
        <ecNumber evidence="1">1.3.3.3</ecNumber>
    </recommendedName>
</protein>
<dbReference type="EC" id="1.3.3.3" evidence="1"/>
<dbReference type="EMBL" id="CP000548">
    <property type="protein sequence ID" value="ABO07246.1"/>
    <property type="molecule type" value="Genomic_DNA"/>
</dbReference>
<dbReference type="RefSeq" id="WP_004185493.1">
    <property type="nucleotide sequence ID" value="NZ_CP007802.1"/>
</dbReference>
<dbReference type="SMR" id="A3MI45"/>
<dbReference type="GeneID" id="92979597"/>
<dbReference type="KEGG" id="bmaz:BM44_2651"/>
<dbReference type="KEGG" id="bmn:BMA10247_0356"/>
<dbReference type="PATRIC" id="fig|320389.8.peg.2991"/>
<dbReference type="UniPathway" id="UPA00251">
    <property type="reaction ID" value="UER00322"/>
</dbReference>
<dbReference type="GO" id="GO:0005737">
    <property type="term" value="C:cytoplasm"/>
    <property type="evidence" value="ECO:0007669"/>
    <property type="project" value="UniProtKB-SubCell"/>
</dbReference>
<dbReference type="GO" id="GO:0004109">
    <property type="term" value="F:coproporphyrinogen oxidase activity"/>
    <property type="evidence" value="ECO:0007669"/>
    <property type="project" value="UniProtKB-UniRule"/>
</dbReference>
<dbReference type="GO" id="GO:0046872">
    <property type="term" value="F:metal ion binding"/>
    <property type="evidence" value="ECO:0007669"/>
    <property type="project" value="UniProtKB-KW"/>
</dbReference>
<dbReference type="GO" id="GO:0042803">
    <property type="term" value="F:protein homodimerization activity"/>
    <property type="evidence" value="ECO:0000250"/>
    <property type="project" value="UniProtKB"/>
</dbReference>
<dbReference type="GO" id="GO:0006782">
    <property type="term" value="P:protoporphyrinogen IX biosynthetic process"/>
    <property type="evidence" value="ECO:0007669"/>
    <property type="project" value="UniProtKB-UniRule"/>
</dbReference>
<dbReference type="FunFam" id="3.40.1500.10:FF:000001">
    <property type="entry name" value="Oxygen-dependent coproporphyrinogen-III oxidase"/>
    <property type="match status" value="1"/>
</dbReference>
<dbReference type="Gene3D" id="3.40.1500.10">
    <property type="entry name" value="Coproporphyrinogen III oxidase, aerobic"/>
    <property type="match status" value="1"/>
</dbReference>
<dbReference type="HAMAP" id="MF_00333">
    <property type="entry name" value="Coprogen_oxidas"/>
    <property type="match status" value="1"/>
</dbReference>
<dbReference type="InterPro" id="IPR001260">
    <property type="entry name" value="Coprogen_oxidase_aer"/>
</dbReference>
<dbReference type="InterPro" id="IPR036406">
    <property type="entry name" value="Coprogen_oxidase_aer_sf"/>
</dbReference>
<dbReference type="InterPro" id="IPR018375">
    <property type="entry name" value="Coprogen_oxidase_CS"/>
</dbReference>
<dbReference type="NCBIfam" id="NF003727">
    <property type="entry name" value="PRK05330.1"/>
    <property type="match status" value="1"/>
</dbReference>
<dbReference type="PANTHER" id="PTHR10755">
    <property type="entry name" value="COPROPORPHYRINOGEN III OXIDASE, MITOCHONDRIAL"/>
    <property type="match status" value="1"/>
</dbReference>
<dbReference type="PANTHER" id="PTHR10755:SF0">
    <property type="entry name" value="OXYGEN-DEPENDENT COPROPORPHYRINOGEN-III OXIDASE, MITOCHONDRIAL"/>
    <property type="match status" value="1"/>
</dbReference>
<dbReference type="Pfam" id="PF01218">
    <property type="entry name" value="Coprogen_oxidas"/>
    <property type="match status" value="1"/>
</dbReference>
<dbReference type="PIRSF" id="PIRSF000166">
    <property type="entry name" value="Coproporphyri_ox"/>
    <property type="match status" value="1"/>
</dbReference>
<dbReference type="PRINTS" id="PR00073">
    <property type="entry name" value="COPRGNOXDASE"/>
</dbReference>
<dbReference type="SUPFAM" id="SSF102886">
    <property type="entry name" value="Coproporphyrinogen III oxidase"/>
    <property type="match status" value="1"/>
</dbReference>
<dbReference type="PROSITE" id="PS01021">
    <property type="entry name" value="COPROGEN_OXIDASE"/>
    <property type="match status" value="1"/>
</dbReference>
<accession>A3MI45</accession>
<name>HEM6_BURM7</name>
<organism>
    <name type="scientific">Burkholderia mallei (strain NCTC 10247)</name>
    <dbReference type="NCBI Taxonomy" id="320389"/>
    <lineage>
        <taxon>Bacteria</taxon>
        <taxon>Pseudomonadati</taxon>
        <taxon>Pseudomonadota</taxon>
        <taxon>Betaproteobacteria</taxon>
        <taxon>Burkholderiales</taxon>
        <taxon>Burkholderiaceae</taxon>
        <taxon>Burkholderia</taxon>
        <taxon>pseudomallei group</taxon>
    </lineage>
</organism>
<sequence length="307" mass="34596">MTDSTYDVNRVRAYLQGLQMRIADALGAFDGTPLAADTWRRGPGERLRGGGCTRILEAGGFFERAGIGFSDVAGDALPPSANASRPQLAGRGFEALGVSLVLHPRNPYCPTVHMNVRMLIATKPGEAPVFWFGGGMDLTPIYGFEEDARHFHRTCRAALEPFGAELYPRFKKWCDDYFFLKHRNEARGIGGIFFDDFSELGFERSFEMLQSVGDAFLPSYLPIVERRRDTPYGERERAFQAYRRGRYVEFNLVFDRGTLFGLQSGGRTESILLSMPPTAGWRYDWHPDPGTPEARLQSEFLVPRDWA</sequence>
<feature type="chain" id="PRO_1000019458" description="Oxygen-dependent coproporphyrinogen-III oxidase">
    <location>
        <begin position="1"/>
        <end position="307"/>
    </location>
</feature>
<feature type="region of interest" description="Important for dimerization" evidence="1">
    <location>
        <begin position="247"/>
        <end position="282"/>
    </location>
</feature>
<feature type="active site" description="Proton donor" evidence="1">
    <location>
        <position position="113"/>
    </location>
</feature>
<feature type="binding site" evidence="1">
    <location>
        <position position="99"/>
    </location>
    <ligand>
        <name>substrate</name>
    </ligand>
</feature>
<feature type="binding site" evidence="1">
    <location>
        <position position="103"/>
    </location>
    <ligand>
        <name>a divalent metal cation</name>
        <dbReference type="ChEBI" id="CHEBI:60240"/>
    </ligand>
</feature>
<feature type="binding site" evidence="1">
    <location>
        <position position="113"/>
    </location>
    <ligand>
        <name>a divalent metal cation</name>
        <dbReference type="ChEBI" id="CHEBI:60240"/>
    </ligand>
</feature>
<feature type="binding site" evidence="1">
    <location>
        <begin position="115"/>
        <end position="117"/>
    </location>
    <ligand>
        <name>substrate</name>
    </ligand>
</feature>
<feature type="binding site" evidence="1">
    <location>
        <position position="152"/>
    </location>
    <ligand>
        <name>a divalent metal cation</name>
        <dbReference type="ChEBI" id="CHEBI:60240"/>
    </ligand>
</feature>
<feature type="binding site" evidence="1">
    <location>
        <position position="182"/>
    </location>
    <ligand>
        <name>a divalent metal cation</name>
        <dbReference type="ChEBI" id="CHEBI:60240"/>
    </ligand>
</feature>
<feature type="binding site" evidence="1">
    <location>
        <begin position="265"/>
        <end position="267"/>
    </location>
    <ligand>
        <name>substrate</name>
    </ligand>
</feature>
<feature type="site" description="Important for dimerization" evidence="1">
    <location>
        <position position="182"/>
    </location>
</feature>
<proteinExistence type="inferred from homology"/>
<keyword id="KW-0963">Cytoplasm</keyword>
<keyword id="KW-0350">Heme biosynthesis</keyword>
<keyword id="KW-0479">Metal-binding</keyword>
<keyword id="KW-0560">Oxidoreductase</keyword>
<keyword id="KW-0627">Porphyrin biosynthesis</keyword>
<evidence type="ECO:0000255" key="1">
    <source>
        <dbReference type="HAMAP-Rule" id="MF_00333"/>
    </source>
</evidence>
<gene>
    <name evidence="1" type="primary">hemF</name>
    <name type="ordered locus">BMA10247_0356</name>
</gene>
<reference key="1">
    <citation type="journal article" date="2010" name="Genome Biol. Evol.">
        <title>Continuing evolution of Burkholderia mallei through genome reduction and large-scale rearrangements.</title>
        <authorList>
            <person name="Losada L."/>
            <person name="Ronning C.M."/>
            <person name="DeShazer D."/>
            <person name="Woods D."/>
            <person name="Fedorova N."/>
            <person name="Kim H.S."/>
            <person name="Shabalina S.A."/>
            <person name="Pearson T.R."/>
            <person name="Brinkac L."/>
            <person name="Tan P."/>
            <person name="Nandi T."/>
            <person name="Crabtree J."/>
            <person name="Badger J."/>
            <person name="Beckstrom-Sternberg S."/>
            <person name="Saqib M."/>
            <person name="Schutzer S.E."/>
            <person name="Keim P."/>
            <person name="Nierman W.C."/>
        </authorList>
    </citation>
    <scope>NUCLEOTIDE SEQUENCE [LARGE SCALE GENOMIC DNA]</scope>
    <source>
        <strain>NCTC 10247</strain>
    </source>
</reference>
<comment type="function">
    <text evidence="1">Involved in the heme biosynthesis. Catalyzes the aerobic oxidative decarboxylation of propionate groups of rings A and B of coproporphyrinogen-III to yield the vinyl groups in protoporphyrinogen-IX.</text>
</comment>
<comment type="catalytic activity">
    <reaction evidence="1">
        <text>coproporphyrinogen III + O2 + 2 H(+) = protoporphyrinogen IX + 2 CO2 + 2 H2O</text>
        <dbReference type="Rhea" id="RHEA:18257"/>
        <dbReference type="ChEBI" id="CHEBI:15377"/>
        <dbReference type="ChEBI" id="CHEBI:15378"/>
        <dbReference type="ChEBI" id="CHEBI:15379"/>
        <dbReference type="ChEBI" id="CHEBI:16526"/>
        <dbReference type="ChEBI" id="CHEBI:57307"/>
        <dbReference type="ChEBI" id="CHEBI:57309"/>
        <dbReference type="EC" id="1.3.3.3"/>
    </reaction>
</comment>
<comment type="cofactor">
    <cofactor evidence="1">
        <name>a divalent metal cation</name>
        <dbReference type="ChEBI" id="CHEBI:60240"/>
    </cofactor>
</comment>
<comment type="pathway">
    <text evidence="1">Porphyrin-containing compound metabolism; protoporphyrin-IX biosynthesis; protoporphyrinogen-IX from coproporphyrinogen-III (O2 route): step 1/1.</text>
</comment>
<comment type="subunit">
    <text evidence="1">Homodimer.</text>
</comment>
<comment type="subcellular location">
    <subcellularLocation>
        <location evidence="1">Cytoplasm</location>
    </subcellularLocation>
</comment>
<comment type="similarity">
    <text evidence="1">Belongs to the aerobic coproporphyrinogen-III oxidase family.</text>
</comment>